<keyword id="KW-0328">Glycosyltransferase</keyword>
<keyword id="KW-0479">Metal-binding</keyword>
<keyword id="KW-0671">Queuosine biosynthesis</keyword>
<keyword id="KW-1185">Reference proteome</keyword>
<keyword id="KW-0808">Transferase</keyword>
<keyword id="KW-0819">tRNA processing</keyword>
<keyword id="KW-0862">Zinc</keyword>
<name>TGT_STRMU</name>
<accession>Q8DVZ3</accession>
<protein>
    <recommendedName>
        <fullName evidence="1">Queuine tRNA-ribosyltransferase</fullName>
        <ecNumber evidence="1">2.4.2.29</ecNumber>
    </recommendedName>
    <alternativeName>
        <fullName evidence="1">Guanine insertion enzyme</fullName>
    </alternativeName>
    <alternativeName>
        <fullName evidence="1">tRNA-guanine transglycosylase</fullName>
    </alternativeName>
</protein>
<dbReference type="EC" id="2.4.2.29" evidence="1"/>
<dbReference type="EMBL" id="AE014133">
    <property type="protein sequence ID" value="AAN58064.1"/>
    <property type="molecule type" value="Genomic_DNA"/>
</dbReference>
<dbReference type="RefSeq" id="NP_720758.1">
    <property type="nucleotide sequence ID" value="NC_004350.2"/>
</dbReference>
<dbReference type="RefSeq" id="WP_002266496.1">
    <property type="nucleotide sequence ID" value="NC_004350.2"/>
</dbReference>
<dbReference type="SMR" id="Q8DVZ3"/>
<dbReference type="STRING" id="210007.SMU_300"/>
<dbReference type="GeneID" id="93860117"/>
<dbReference type="KEGG" id="smu:SMU_300"/>
<dbReference type="PATRIC" id="fig|210007.7.peg.260"/>
<dbReference type="eggNOG" id="COG0343">
    <property type="taxonomic scope" value="Bacteria"/>
</dbReference>
<dbReference type="HOGENOM" id="CLU_022060_0_1_9"/>
<dbReference type="OrthoDB" id="9805417at2"/>
<dbReference type="PhylomeDB" id="Q8DVZ3"/>
<dbReference type="UniPathway" id="UPA00392"/>
<dbReference type="Proteomes" id="UP000002512">
    <property type="component" value="Chromosome"/>
</dbReference>
<dbReference type="GO" id="GO:0005829">
    <property type="term" value="C:cytosol"/>
    <property type="evidence" value="ECO:0007669"/>
    <property type="project" value="TreeGrafter"/>
</dbReference>
<dbReference type="GO" id="GO:0046872">
    <property type="term" value="F:metal ion binding"/>
    <property type="evidence" value="ECO:0007669"/>
    <property type="project" value="UniProtKB-KW"/>
</dbReference>
<dbReference type="GO" id="GO:0008479">
    <property type="term" value="F:tRNA-guanosine(34) queuine transglycosylase activity"/>
    <property type="evidence" value="ECO:0007669"/>
    <property type="project" value="UniProtKB-UniRule"/>
</dbReference>
<dbReference type="GO" id="GO:0008616">
    <property type="term" value="P:queuosine biosynthetic process"/>
    <property type="evidence" value="ECO:0007669"/>
    <property type="project" value="UniProtKB-UniRule"/>
</dbReference>
<dbReference type="GO" id="GO:0002099">
    <property type="term" value="P:tRNA wobble guanine modification"/>
    <property type="evidence" value="ECO:0007669"/>
    <property type="project" value="TreeGrafter"/>
</dbReference>
<dbReference type="GO" id="GO:0101030">
    <property type="term" value="P:tRNA-guanine transglycosylation"/>
    <property type="evidence" value="ECO:0007669"/>
    <property type="project" value="InterPro"/>
</dbReference>
<dbReference type="FunFam" id="3.20.20.105:FF:000001">
    <property type="entry name" value="Queuine tRNA-ribosyltransferase"/>
    <property type="match status" value="1"/>
</dbReference>
<dbReference type="Gene3D" id="3.20.20.105">
    <property type="entry name" value="Queuine tRNA-ribosyltransferase-like"/>
    <property type="match status" value="1"/>
</dbReference>
<dbReference type="HAMAP" id="MF_00168">
    <property type="entry name" value="Q_tRNA_Tgt"/>
    <property type="match status" value="1"/>
</dbReference>
<dbReference type="InterPro" id="IPR050076">
    <property type="entry name" value="ArchSynthase1/Queuine_TRR"/>
</dbReference>
<dbReference type="InterPro" id="IPR004803">
    <property type="entry name" value="TGT"/>
</dbReference>
<dbReference type="InterPro" id="IPR036511">
    <property type="entry name" value="TGT-like_sf"/>
</dbReference>
<dbReference type="InterPro" id="IPR002616">
    <property type="entry name" value="tRNA_ribo_trans-like"/>
</dbReference>
<dbReference type="NCBIfam" id="TIGR00430">
    <property type="entry name" value="Q_tRNA_tgt"/>
    <property type="match status" value="1"/>
</dbReference>
<dbReference type="NCBIfam" id="TIGR00449">
    <property type="entry name" value="tgt_general"/>
    <property type="match status" value="1"/>
</dbReference>
<dbReference type="PANTHER" id="PTHR46499">
    <property type="entry name" value="QUEUINE TRNA-RIBOSYLTRANSFERASE"/>
    <property type="match status" value="1"/>
</dbReference>
<dbReference type="PANTHER" id="PTHR46499:SF1">
    <property type="entry name" value="QUEUINE TRNA-RIBOSYLTRANSFERASE"/>
    <property type="match status" value="1"/>
</dbReference>
<dbReference type="Pfam" id="PF01702">
    <property type="entry name" value="TGT"/>
    <property type="match status" value="1"/>
</dbReference>
<dbReference type="SUPFAM" id="SSF51713">
    <property type="entry name" value="tRNA-guanine transglycosylase"/>
    <property type="match status" value="1"/>
</dbReference>
<gene>
    <name evidence="1" type="primary">tgt</name>
    <name type="ordered locus">SMU_300</name>
</gene>
<reference key="1">
    <citation type="journal article" date="2002" name="Proc. Natl. Acad. Sci. U.S.A.">
        <title>Genome sequence of Streptococcus mutans UA159, a cariogenic dental pathogen.</title>
        <authorList>
            <person name="Ajdic D.J."/>
            <person name="McShan W.M."/>
            <person name="McLaughlin R.E."/>
            <person name="Savic G."/>
            <person name="Chang J."/>
            <person name="Carson M.B."/>
            <person name="Primeaux C."/>
            <person name="Tian R."/>
            <person name="Kenton S."/>
            <person name="Jia H.G."/>
            <person name="Lin S.P."/>
            <person name="Qian Y."/>
            <person name="Li S."/>
            <person name="Zhu H."/>
            <person name="Najar F.Z."/>
            <person name="Lai H."/>
            <person name="White J."/>
            <person name="Roe B.A."/>
            <person name="Ferretti J.J."/>
        </authorList>
    </citation>
    <scope>NUCLEOTIDE SEQUENCE [LARGE SCALE GENOMIC DNA]</scope>
    <source>
        <strain>ATCC 700610 / UA159</strain>
    </source>
</reference>
<sequence>MTHSPIQYRLIKKEKHTGARLGEIITPHGVFPTPMFMPVGTQATVKTQSPEELKEMKAGIILANTYHLWLRPGDDLVARAGGLHKFMNWDQPILTDSGGFQVYSLAEKRNITEEGVTFKNHLNGARMFLTPEKAISIQNNLGSDIMMSFDECPQFYQPYDYVKASIERTSRWAERGLKAHRRPQDQGLFGIVQGAGFEDLRRQSTADLVSMDFPGYSIGGLAVGESHEEMNAVLDFTTPLLPENKPRYLMGVGAPDSLIDGVIRGVDMFDCVLPTRIARNGTCMTSRGRLVVKNAQYAEDFTPLDHDCDCYTCQNYTRAYIRHLIKADETFGLRLTSYHNLYFLLNLMEKIRQAIMDDNILEFREDFIEKYGYGRSERNF</sequence>
<feature type="chain" id="PRO_0000135532" description="Queuine tRNA-ribosyltransferase">
    <location>
        <begin position="1"/>
        <end position="380"/>
    </location>
</feature>
<feature type="region of interest" description="RNA binding" evidence="1">
    <location>
        <begin position="251"/>
        <end position="257"/>
    </location>
</feature>
<feature type="region of interest" description="RNA binding; important for wobble base 34 recognition" evidence="1">
    <location>
        <begin position="275"/>
        <end position="279"/>
    </location>
</feature>
<feature type="active site" description="Proton acceptor" evidence="1">
    <location>
        <position position="96"/>
    </location>
</feature>
<feature type="active site" description="Nucleophile" evidence="1">
    <location>
        <position position="270"/>
    </location>
</feature>
<feature type="binding site" evidence="1">
    <location>
        <begin position="96"/>
        <end position="100"/>
    </location>
    <ligand>
        <name>substrate</name>
    </ligand>
</feature>
<feature type="binding site" evidence="1">
    <location>
        <position position="150"/>
    </location>
    <ligand>
        <name>substrate</name>
    </ligand>
</feature>
<feature type="binding site" evidence="1">
    <location>
        <position position="193"/>
    </location>
    <ligand>
        <name>substrate</name>
    </ligand>
</feature>
<feature type="binding site" evidence="1">
    <location>
        <position position="220"/>
    </location>
    <ligand>
        <name>substrate</name>
    </ligand>
</feature>
<feature type="binding site" evidence="1">
    <location>
        <position position="308"/>
    </location>
    <ligand>
        <name>Zn(2+)</name>
        <dbReference type="ChEBI" id="CHEBI:29105"/>
    </ligand>
</feature>
<feature type="binding site" evidence="1">
    <location>
        <position position="310"/>
    </location>
    <ligand>
        <name>Zn(2+)</name>
        <dbReference type="ChEBI" id="CHEBI:29105"/>
    </ligand>
</feature>
<feature type="binding site" evidence="1">
    <location>
        <position position="313"/>
    </location>
    <ligand>
        <name>Zn(2+)</name>
        <dbReference type="ChEBI" id="CHEBI:29105"/>
    </ligand>
</feature>
<feature type="binding site" evidence="1">
    <location>
        <position position="339"/>
    </location>
    <ligand>
        <name>Zn(2+)</name>
        <dbReference type="ChEBI" id="CHEBI:29105"/>
    </ligand>
</feature>
<comment type="function">
    <text evidence="1">Catalyzes the base-exchange of a guanine (G) residue with the queuine precursor 7-aminomethyl-7-deazaguanine (PreQ1) at position 34 (anticodon wobble position) in tRNAs with GU(N) anticodons (tRNA-Asp, -Asn, -His and -Tyr). Catalysis occurs through a double-displacement mechanism. The nucleophile active site attacks the C1' of nucleotide 34 to detach the guanine base from the RNA, forming a covalent enzyme-RNA intermediate. The proton acceptor active site deprotonates the incoming PreQ1, allowing a nucleophilic attack on the C1' of the ribose to form the product. After dissociation, two additional enzymatic reactions on the tRNA convert PreQ1 to queuine (Q), resulting in the hypermodified nucleoside queuosine (7-(((4,5-cis-dihydroxy-2-cyclopenten-1-yl)amino)methyl)-7-deazaguanosine).</text>
</comment>
<comment type="catalytic activity">
    <reaction evidence="1">
        <text>7-aminomethyl-7-carbaguanine + guanosine(34) in tRNA = 7-aminomethyl-7-carbaguanosine(34) in tRNA + guanine</text>
        <dbReference type="Rhea" id="RHEA:24104"/>
        <dbReference type="Rhea" id="RHEA-COMP:10341"/>
        <dbReference type="Rhea" id="RHEA-COMP:10342"/>
        <dbReference type="ChEBI" id="CHEBI:16235"/>
        <dbReference type="ChEBI" id="CHEBI:58703"/>
        <dbReference type="ChEBI" id="CHEBI:74269"/>
        <dbReference type="ChEBI" id="CHEBI:82833"/>
        <dbReference type="EC" id="2.4.2.29"/>
    </reaction>
</comment>
<comment type="cofactor">
    <cofactor evidence="1">
        <name>Zn(2+)</name>
        <dbReference type="ChEBI" id="CHEBI:29105"/>
    </cofactor>
    <text evidence="1">Binds 1 zinc ion per subunit.</text>
</comment>
<comment type="pathway">
    <text evidence="1">tRNA modification; tRNA-queuosine biosynthesis.</text>
</comment>
<comment type="subunit">
    <text evidence="1">Homodimer. Within each dimer, one monomer is responsible for RNA recognition and catalysis, while the other monomer binds to the replacement base PreQ1.</text>
</comment>
<comment type="similarity">
    <text evidence="1">Belongs to the queuine tRNA-ribosyltransferase family.</text>
</comment>
<proteinExistence type="inferred from homology"/>
<organism>
    <name type="scientific">Streptococcus mutans serotype c (strain ATCC 700610 / UA159)</name>
    <dbReference type="NCBI Taxonomy" id="210007"/>
    <lineage>
        <taxon>Bacteria</taxon>
        <taxon>Bacillati</taxon>
        <taxon>Bacillota</taxon>
        <taxon>Bacilli</taxon>
        <taxon>Lactobacillales</taxon>
        <taxon>Streptococcaceae</taxon>
        <taxon>Streptococcus</taxon>
    </lineage>
</organism>
<evidence type="ECO:0000255" key="1">
    <source>
        <dbReference type="HAMAP-Rule" id="MF_00168"/>
    </source>
</evidence>